<sequence length="441" mass="48091">MAGASTSRKSYGRIFTLLRDHNKWFENSIPLIASENIPSPAVREALISDFGNRYAEGWPGERVYAGCTYIDMVETECMKLAKKLFKAEFADVRPVSGVVANLAIYSAFSDPGDVMIAPSIPAGGHISHGRKEHSGTAGLVHGLEVEFYPFDAKSMTIDVDATKAKIIDLEKAGRTPKIAMFGGSLFLFPHPVKELAEFMKGRGMHINYDGAHVAGLIAGGQFQDPIREGADTMTMSTHKTLFGPQGGLVLGRNEHAEGIKKAMFPGLTSSHHIHHMAAKAVAFTEALEFGKKYAKDVVRNAKALAESLSGLGFKVLGEDGGFTKSHQVAVNVLEYSDGGKIEARLEKANIIVNRQLIPGDIKAGRHYLHPGGIRLGVSEVTRLGMGTGEMAEIAELMKQAVTERGDPKRLASKVKSFRKPFQKVQYCFDKKLPAYEYVKLR</sequence>
<accession>A0RYP2</accession>
<name>GLYA_CENSY</name>
<comment type="function">
    <text evidence="1">Catalyzes the reversible interconversion of serine and glycine with a modified folate serving as the one-carbon carrier. Also exhibits a pteridine-independent aldolase activity toward beta-hydroxyamino acids, producing glycine and aldehydes, via a retro-aldol mechanism.</text>
</comment>
<comment type="cofactor">
    <cofactor evidence="1">
        <name>pyridoxal 5'-phosphate</name>
        <dbReference type="ChEBI" id="CHEBI:597326"/>
    </cofactor>
</comment>
<comment type="pathway">
    <text evidence="1">Amino-acid biosynthesis; glycine biosynthesis; glycine from L-serine: step 1/1.</text>
</comment>
<comment type="subunit">
    <text evidence="1">Homodimer.</text>
</comment>
<comment type="subcellular location">
    <subcellularLocation>
        <location evidence="1">Cytoplasm</location>
    </subcellularLocation>
</comment>
<comment type="similarity">
    <text evidence="1">Belongs to the SHMT family.</text>
</comment>
<organism>
    <name type="scientific">Cenarchaeum symbiosum (strain A)</name>
    <dbReference type="NCBI Taxonomy" id="414004"/>
    <lineage>
        <taxon>Archaea</taxon>
        <taxon>Nitrososphaerota</taxon>
        <taxon>Candidatus Cenarchaeales</taxon>
        <taxon>Candidatus Cenarchaeaceae</taxon>
        <taxon>Candidatus Cenarchaeum</taxon>
    </lineage>
</organism>
<gene>
    <name evidence="1" type="primary">glyA</name>
    <name type="ordered locus">CENSYa_1849</name>
</gene>
<protein>
    <recommendedName>
        <fullName evidence="1">Serine hydroxymethyltransferase</fullName>
        <shortName evidence="1">SHMT</shortName>
        <shortName evidence="1">Serine methylase</shortName>
        <ecNumber evidence="1">2.1.2.-</ecNumber>
    </recommendedName>
</protein>
<keyword id="KW-0028">Amino-acid biosynthesis</keyword>
<keyword id="KW-0963">Cytoplasm</keyword>
<keyword id="KW-0554">One-carbon metabolism</keyword>
<keyword id="KW-0663">Pyridoxal phosphate</keyword>
<keyword id="KW-1185">Reference proteome</keyword>
<keyword id="KW-0808">Transferase</keyword>
<dbReference type="EC" id="2.1.2.-" evidence="1"/>
<dbReference type="EMBL" id="DP000238">
    <property type="protein sequence ID" value="ABK78459.1"/>
    <property type="molecule type" value="Genomic_DNA"/>
</dbReference>
<dbReference type="SMR" id="A0RYP2"/>
<dbReference type="STRING" id="414004.CENSYa_1849"/>
<dbReference type="EnsemblBacteria" id="ABK78459">
    <property type="protein sequence ID" value="ABK78459"/>
    <property type="gene ID" value="CENSYa_1849"/>
</dbReference>
<dbReference type="KEGG" id="csy:CENSYa_1849"/>
<dbReference type="PATRIC" id="fig|414004.10.peg.1687"/>
<dbReference type="HOGENOM" id="CLU_022477_2_1_2"/>
<dbReference type="UniPathway" id="UPA00288">
    <property type="reaction ID" value="UER01023"/>
</dbReference>
<dbReference type="Proteomes" id="UP000000758">
    <property type="component" value="Chromosome"/>
</dbReference>
<dbReference type="GO" id="GO:0005737">
    <property type="term" value="C:cytoplasm"/>
    <property type="evidence" value="ECO:0007669"/>
    <property type="project" value="UniProtKB-SubCell"/>
</dbReference>
<dbReference type="GO" id="GO:0004372">
    <property type="term" value="F:glycine hydroxymethyltransferase activity"/>
    <property type="evidence" value="ECO:0007669"/>
    <property type="project" value="UniProtKB-UniRule"/>
</dbReference>
<dbReference type="GO" id="GO:0030170">
    <property type="term" value="F:pyridoxal phosphate binding"/>
    <property type="evidence" value="ECO:0007669"/>
    <property type="project" value="UniProtKB-UniRule"/>
</dbReference>
<dbReference type="GO" id="GO:0019264">
    <property type="term" value="P:glycine biosynthetic process from serine"/>
    <property type="evidence" value="ECO:0007669"/>
    <property type="project" value="UniProtKB-UniRule"/>
</dbReference>
<dbReference type="GO" id="GO:0035999">
    <property type="term" value="P:tetrahydrofolate interconversion"/>
    <property type="evidence" value="ECO:0007669"/>
    <property type="project" value="InterPro"/>
</dbReference>
<dbReference type="CDD" id="cd00378">
    <property type="entry name" value="SHMT"/>
    <property type="match status" value="1"/>
</dbReference>
<dbReference type="FunFam" id="3.40.640.10:FF:000101">
    <property type="entry name" value="Serine hydroxymethyltransferase"/>
    <property type="match status" value="1"/>
</dbReference>
<dbReference type="FunFam" id="3.90.1150.10:FF:000114">
    <property type="entry name" value="Serine hydroxymethyltransferase"/>
    <property type="match status" value="1"/>
</dbReference>
<dbReference type="Gene3D" id="3.90.1150.10">
    <property type="entry name" value="Aspartate Aminotransferase, domain 1"/>
    <property type="match status" value="1"/>
</dbReference>
<dbReference type="Gene3D" id="3.40.640.10">
    <property type="entry name" value="Type I PLP-dependent aspartate aminotransferase-like (Major domain)"/>
    <property type="match status" value="1"/>
</dbReference>
<dbReference type="HAMAP" id="MF_00051">
    <property type="entry name" value="SHMT"/>
    <property type="match status" value="1"/>
</dbReference>
<dbReference type="InterPro" id="IPR015424">
    <property type="entry name" value="PyrdxlP-dep_Trfase"/>
</dbReference>
<dbReference type="InterPro" id="IPR015421">
    <property type="entry name" value="PyrdxlP-dep_Trfase_major"/>
</dbReference>
<dbReference type="InterPro" id="IPR015422">
    <property type="entry name" value="PyrdxlP-dep_Trfase_small"/>
</dbReference>
<dbReference type="InterPro" id="IPR001085">
    <property type="entry name" value="Ser_HO-MeTrfase"/>
</dbReference>
<dbReference type="InterPro" id="IPR049943">
    <property type="entry name" value="Ser_HO-MeTrfase-like"/>
</dbReference>
<dbReference type="InterPro" id="IPR039429">
    <property type="entry name" value="SHMT-like_dom"/>
</dbReference>
<dbReference type="NCBIfam" id="NF000586">
    <property type="entry name" value="PRK00011.1"/>
    <property type="match status" value="1"/>
</dbReference>
<dbReference type="PANTHER" id="PTHR11680">
    <property type="entry name" value="SERINE HYDROXYMETHYLTRANSFERASE"/>
    <property type="match status" value="1"/>
</dbReference>
<dbReference type="PANTHER" id="PTHR11680:SF35">
    <property type="entry name" value="SERINE HYDROXYMETHYLTRANSFERASE 1"/>
    <property type="match status" value="1"/>
</dbReference>
<dbReference type="Pfam" id="PF00464">
    <property type="entry name" value="SHMT"/>
    <property type="match status" value="1"/>
</dbReference>
<dbReference type="PIRSF" id="PIRSF000412">
    <property type="entry name" value="SHMT"/>
    <property type="match status" value="1"/>
</dbReference>
<dbReference type="SUPFAM" id="SSF53383">
    <property type="entry name" value="PLP-dependent transferases"/>
    <property type="match status" value="1"/>
</dbReference>
<evidence type="ECO:0000255" key="1">
    <source>
        <dbReference type="HAMAP-Rule" id="MF_00051"/>
    </source>
</evidence>
<feature type="chain" id="PRO_0000369965" description="Serine hydroxymethyltransferase">
    <location>
        <begin position="1"/>
        <end position="441"/>
    </location>
</feature>
<feature type="binding site" evidence="1">
    <location>
        <begin position="124"/>
        <end position="126"/>
    </location>
    <ligand>
        <name>(6S)-5,6,7,8-tetrahydrofolate</name>
        <dbReference type="ChEBI" id="CHEBI:57453"/>
    </ligand>
</feature>
<feature type="site" description="Plays an important role in substrate specificity" evidence="1">
    <location>
        <position position="238"/>
    </location>
</feature>
<feature type="modified residue" description="N6-(pyridoxal phosphate)lysine" evidence="1">
    <location>
        <position position="239"/>
    </location>
</feature>
<reference key="1">
    <citation type="journal article" date="2006" name="Proc. Natl. Acad. Sci. U.S.A.">
        <title>Genomic analysis of the uncultivated marine crenarchaeote Cenarchaeum symbiosum.</title>
        <authorList>
            <person name="Hallam S.J."/>
            <person name="Konstantinidis K.T."/>
            <person name="Putnam N."/>
            <person name="Schleper C."/>
            <person name="Watanabe Y."/>
            <person name="Sugahara J."/>
            <person name="Preston C."/>
            <person name="de la Torre J."/>
            <person name="Richardson P.M."/>
            <person name="DeLong E.F."/>
        </authorList>
    </citation>
    <scope>NUCLEOTIDE SEQUENCE [LARGE SCALE GENOMIC DNA]</scope>
    <source>
        <strain>A</strain>
    </source>
</reference>
<proteinExistence type="inferred from homology"/>